<organism>
    <name type="scientific">Rhodococcus opacus (strain B4)</name>
    <dbReference type="NCBI Taxonomy" id="632772"/>
    <lineage>
        <taxon>Bacteria</taxon>
        <taxon>Bacillati</taxon>
        <taxon>Actinomycetota</taxon>
        <taxon>Actinomycetes</taxon>
        <taxon>Mycobacteriales</taxon>
        <taxon>Nocardiaceae</taxon>
        <taxon>Rhodococcus</taxon>
    </lineage>
</organism>
<protein>
    <recommendedName>
        <fullName evidence="1">Phosphoribosylformylglycinamidine synthase subunit PurL</fullName>
        <shortName evidence="1">FGAM synthase</shortName>
        <ecNumber evidence="1">6.3.5.3</ecNumber>
    </recommendedName>
    <alternativeName>
        <fullName evidence="1">Formylglycinamide ribonucleotide amidotransferase subunit II</fullName>
        <shortName evidence="1">FGAR amidotransferase II</shortName>
        <shortName evidence="1">FGAR-AT II</shortName>
    </alternativeName>
    <alternativeName>
        <fullName evidence="1">Glutamine amidotransferase PurL</fullName>
    </alternativeName>
    <alternativeName>
        <fullName evidence="1">Phosphoribosylformylglycinamidine synthase subunit II</fullName>
    </alternativeName>
</protein>
<keyword id="KW-0067">ATP-binding</keyword>
<keyword id="KW-0963">Cytoplasm</keyword>
<keyword id="KW-0436">Ligase</keyword>
<keyword id="KW-0460">Magnesium</keyword>
<keyword id="KW-0479">Metal-binding</keyword>
<keyword id="KW-0547">Nucleotide-binding</keyword>
<keyword id="KW-0658">Purine biosynthesis</keyword>
<feature type="chain" id="PRO_1000134906" description="Phosphoribosylformylglycinamidine synthase subunit PurL">
    <location>
        <begin position="1"/>
        <end position="761"/>
    </location>
</feature>
<feature type="active site" evidence="1">
    <location>
        <position position="58"/>
    </location>
</feature>
<feature type="active site" description="Proton acceptor" evidence="1">
    <location>
        <position position="109"/>
    </location>
</feature>
<feature type="binding site" evidence="1">
    <location>
        <position position="61"/>
    </location>
    <ligand>
        <name>ATP</name>
        <dbReference type="ChEBI" id="CHEBI:30616"/>
    </ligand>
</feature>
<feature type="binding site" evidence="1">
    <location>
        <position position="105"/>
    </location>
    <ligand>
        <name>ATP</name>
        <dbReference type="ChEBI" id="CHEBI:30616"/>
    </ligand>
</feature>
<feature type="binding site" evidence="1">
    <location>
        <position position="107"/>
    </location>
    <ligand>
        <name>Mg(2+)</name>
        <dbReference type="ChEBI" id="CHEBI:18420"/>
        <label>1</label>
    </ligand>
</feature>
<feature type="binding site" evidence="1">
    <location>
        <begin position="108"/>
        <end position="111"/>
    </location>
    <ligand>
        <name>substrate</name>
    </ligand>
</feature>
<feature type="binding site" evidence="1">
    <location>
        <position position="130"/>
    </location>
    <ligand>
        <name>substrate</name>
    </ligand>
</feature>
<feature type="binding site" evidence="1">
    <location>
        <position position="131"/>
    </location>
    <ligand>
        <name>Mg(2+)</name>
        <dbReference type="ChEBI" id="CHEBI:18420"/>
        <label>2</label>
    </ligand>
</feature>
<feature type="binding site" evidence="1">
    <location>
        <position position="259"/>
    </location>
    <ligand>
        <name>substrate</name>
    </ligand>
</feature>
<feature type="binding site" evidence="1">
    <location>
        <position position="287"/>
    </location>
    <ligand>
        <name>Mg(2+)</name>
        <dbReference type="ChEBI" id="CHEBI:18420"/>
        <label>2</label>
    </ligand>
</feature>
<feature type="binding site" evidence="1">
    <location>
        <begin position="331"/>
        <end position="333"/>
    </location>
    <ligand>
        <name>substrate</name>
    </ligand>
</feature>
<feature type="binding site" evidence="1">
    <location>
        <position position="519"/>
    </location>
    <ligand>
        <name>ATP</name>
        <dbReference type="ChEBI" id="CHEBI:30616"/>
    </ligand>
</feature>
<feature type="binding site" evidence="1">
    <location>
        <position position="556"/>
    </location>
    <ligand>
        <name>ATP</name>
        <dbReference type="ChEBI" id="CHEBI:30616"/>
    </ligand>
</feature>
<feature type="binding site" evidence="1">
    <location>
        <position position="557"/>
    </location>
    <ligand>
        <name>Mg(2+)</name>
        <dbReference type="ChEBI" id="CHEBI:18420"/>
        <label>1</label>
    </ligand>
</feature>
<feature type="binding site" evidence="1">
    <location>
        <position position="559"/>
    </location>
    <ligand>
        <name>substrate</name>
    </ligand>
</feature>
<dbReference type="EC" id="6.3.5.3" evidence="1"/>
<dbReference type="EMBL" id="AP011115">
    <property type="protein sequence ID" value="BAH53166.1"/>
    <property type="molecule type" value="Genomic_DNA"/>
</dbReference>
<dbReference type="RefSeq" id="WP_015888677.1">
    <property type="nucleotide sequence ID" value="NC_012522.1"/>
</dbReference>
<dbReference type="SMR" id="C1ATA2"/>
<dbReference type="STRING" id="632772.ROP_49190"/>
<dbReference type="KEGG" id="rop:ROP_49190"/>
<dbReference type="PATRIC" id="fig|632772.20.peg.5139"/>
<dbReference type="HOGENOM" id="CLU_003100_0_1_11"/>
<dbReference type="OrthoDB" id="9804441at2"/>
<dbReference type="UniPathway" id="UPA00074">
    <property type="reaction ID" value="UER00128"/>
</dbReference>
<dbReference type="Proteomes" id="UP000002212">
    <property type="component" value="Chromosome"/>
</dbReference>
<dbReference type="GO" id="GO:0005737">
    <property type="term" value="C:cytoplasm"/>
    <property type="evidence" value="ECO:0007669"/>
    <property type="project" value="UniProtKB-SubCell"/>
</dbReference>
<dbReference type="GO" id="GO:0005524">
    <property type="term" value="F:ATP binding"/>
    <property type="evidence" value="ECO:0007669"/>
    <property type="project" value="UniProtKB-UniRule"/>
</dbReference>
<dbReference type="GO" id="GO:0000287">
    <property type="term" value="F:magnesium ion binding"/>
    <property type="evidence" value="ECO:0007669"/>
    <property type="project" value="UniProtKB-UniRule"/>
</dbReference>
<dbReference type="GO" id="GO:0004642">
    <property type="term" value="F:phosphoribosylformylglycinamidine synthase activity"/>
    <property type="evidence" value="ECO:0007669"/>
    <property type="project" value="UniProtKB-UniRule"/>
</dbReference>
<dbReference type="GO" id="GO:0006189">
    <property type="term" value="P:'de novo' IMP biosynthetic process"/>
    <property type="evidence" value="ECO:0007669"/>
    <property type="project" value="UniProtKB-UniRule"/>
</dbReference>
<dbReference type="CDD" id="cd02203">
    <property type="entry name" value="PurL_repeat1"/>
    <property type="match status" value="1"/>
</dbReference>
<dbReference type="CDD" id="cd02204">
    <property type="entry name" value="PurL_repeat2"/>
    <property type="match status" value="1"/>
</dbReference>
<dbReference type="FunFam" id="3.30.1330.10:FF:000004">
    <property type="entry name" value="Phosphoribosylformylglycinamidine synthase subunit PurL"/>
    <property type="match status" value="1"/>
</dbReference>
<dbReference type="Gene3D" id="3.90.650.10">
    <property type="entry name" value="PurM-like C-terminal domain"/>
    <property type="match status" value="2"/>
</dbReference>
<dbReference type="Gene3D" id="3.30.1330.10">
    <property type="entry name" value="PurM-like, N-terminal domain"/>
    <property type="match status" value="2"/>
</dbReference>
<dbReference type="HAMAP" id="MF_00420">
    <property type="entry name" value="PurL_2"/>
    <property type="match status" value="1"/>
</dbReference>
<dbReference type="InterPro" id="IPR010074">
    <property type="entry name" value="PRibForGlyAmidine_synth_PurL"/>
</dbReference>
<dbReference type="InterPro" id="IPR041609">
    <property type="entry name" value="PurL_linker"/>
</dbReference>
<dbReference type="InterPro" id="IPR010918">
    <property type="entry name" value="PurM-like_C_dom"/>
</dbReference>
<dbReference type="InterPro" id="IPR036676">
    <property type="entry name" value="PurM-like_C_sf"/>
</dbReference>
<dbReference type="InterPro" id="IPR016188">
    <property type="entry name" value="PurM-like_N"/>
</dbReference>
<dbReference type="InterPro" id="IPR036921">
    <property type="entry name" value="PurM-like_N_sf"/>
</dbReference>
<dbReference type="NCBIfam" id="TIGR01736">
    <property type="entry name" value="FGAM_synth_II"/>
    <property type="match status" value="1"/>
</dbReference>
<dbReference type="NCBIfam" id="NF002290">
    <property type="entry name" value="PRK01213.1"/>
    <property type="match status" value="1"/>
</dbReference>
<dbReference type="PANTHER" id="PTHR43555">
    <property type="entry name" value="PHOSPHORIBOSYLFORMYLGLYCINAMIDINE SYNTHASE SUBUNIT PURL"/>
    <property type="match status" value="1"/>
</dbReference>
<dbReference type="PANTHER" id="PTHR43555:SF1">
    <property type="entry name" value="PHOSPHORIBOSYLFORMYLGLYCINAMIDINE SYNTHASE SUBUNIT PURL"/>
    <property type="match status" value="1"/>
</dbReference>
<dbReference type="Pfam" id="PF00586">
    <property type="entry name" value="AIRS"/>
    <property type="match status" value="2"/>
</dbReference>
<dbReference type="Pfam" id="PF02769">
    <property type="entry name" value="AIRS_C"/>
    <property type="match status" value="2"/>
</dbReference>
<dbReference type="Pfam" id="PF18072">
    <property type="entry name" value="FGAR-AT_linker"/>
    <property type="match status" value="1"/>
</dbReference>
<dbReference type="PIRSF" id="PIRSF001587">
    <property type="entry name" value="FGAM_synthase_II"/>
    <property type="match status" value="1"/>
</dbReference>
<dbReference type="SUPFAM" id="SSF56042">
    <property type="entry name" value="PurM C-terminal domain-like"/>
    <property type="match status" value="2"/>
</dbReference>
<dbReference type="SUPFAM" id="SSF55326">
    <property type="entry name" value="PurM N-terminal domain-like"/>
    <property type="match status" value="2"/>
</dbReference>
<evidence type="ECO:0000255" key="1">
    <source>
        <dbReference type="HAMAP-Rule" id="MF_00420"/>
    </source>
</evidence>
<gene>
    <name evidence="1" type="primary">purL</name>
    <name type="ordered locus">ROP_49190</name>
</gene>
<accession>C1ATA2</accession>
<sequence>MSAHPVDTVTAATATPDVAQPFKELGLKDDEYARIKEILGRRPTEAELAMYSVMWSEHCSYKSSKVHLRYFGETTTDEMRSSMLAGIGENAGVVDIGDGWAVTFKVESHNHPSYVEPYQGAATGVGGIVRDIMAMGARPIAVMDQLRFGAADAPDTRRVVDGVVRGVGGYGNSLGLPNIGGETVFDESYAGNPLVNALCAGTMRVEDLHLAFASGAGNKIILFGARTGLDGIGGVSVLASETFDGDESGTGRKKLPAVQVGDPFTEKVLIECCLELYAAKLVVGIQDLGGAGLSCATSELAAAGDGGMHINLEQVPMRATGMTAAEVLSSESQERMCAVVTPENVDAFMAVCKKWDVLATDIGEVTDGDRLTISWHGETVVDVPPRTVAHEGPVYERPVQRPASQDALVANTTAGLKRPESADELKATLLKMIASPALCSRKWITEQYDRYVRGNTVLAENADSGVIRVDEKTGRGIALATDASGRYTALDPYAGAQLALAEAFRNVAVTGATPKAVSNCLNFGSPEDPGVMWQFQQAVRGLADGCATLGIPVTGGNVSFYNQTGSTAILPTPVVAVLGVIDDVHRRIPTGLGLEPGETLILLGDTNDEFDGSIWSQVEHGHLGGVPPKVDLEREQLLADILLAASRDGLVSAAHDLSEGGLAQAVVEAALAGETGCRILLPDDADPFVTLFSESSGRVLVAVPRTEETRFTGMCTARNLPWVRIGVVDEGSDSVEVQGQFSVSLAELRTTFEGTLPALFG</sequence>
<name>PURL_RHOOB</name>
<comment type="function">
    <text evidence="1">Part of the phosphoribosylformylglycinamidine synthase complex involved in the purines biosynthetic pathway. Catalyzes the ATP-dependent conversion of formylglycinamide ribonucleotide (FGAR) and glutamine to yield formylglycinamidine ribonucleotide (FGAM) and glutamate. The FGAM synthase complex is composed of three subunits. PurQ produces an ammonia molecule by converting glutamine to glutamate. PurL transfers the ammonia molecule to FGAR to form FGAM in an ATP-dependent manner. PurS interacts with PurQ and PurL and is thought to assist in the transfer of the ammonia molecule from PurQ to PurL.</text>
</comment>
<comment type="catalytic activity">
    <reaction evidence="1">
        <text>N(2)-formyl-N(1)-(5-phospho-beta-D-ribosyl)glycinamide + L-glutamine + ATP + H2O = 2-formamido-N(1)-(5-O-phospho-beta-D-ribosyl)acetamidine + L-glutamate + ADP + phosphate + H(+)</text>
        <dbReference type="Rhea" id="RHEA:17129"/>
        <dbReference type="ChEBI" id="CHEBI:15377"/>
        <dbReference type="ChEBI" id="CHEBI:15378"/>
        <dbReference type="ChEBI" id="CHEBI:29985"/>
        <dbReference type="ChEBI" id="CHEBI:30616"/>
        <dbReference type="ChEBI" id="CHEBI:43474"/>
        <dbReference type="ChEBI" id="CHEBI:58359"/>
        <dbReference type="ChEBI" id="CHEBI:147286"/>
        <dbReference type="ChEBI" id="CHEBI:147287"/>
        <dbReference type="ChEBI" id="CHEBI:456216"/>
        <dbReference type="EC" id="6.3.5.3"/>
    </reaction>
</comment>
<comment type="pathway">
    <text evidence="1">Purine metabolism; IMP biosynthesis via de novo pathway; 5-amino-1-(5-phospho-D-ribosyl)imidazole from N(2)-formyl-N(1)-(5-phospho-D-ribosyl)glycinamide: step 1/2.</text>
</comment>
<comment type="subunit">
    <text evidence="1">Monomer. Part of the FGAM synthase complex composed of 1 PurL, 1 PurQ and 2 PurS subunits.</text>
</comment>
<comment type="subcellular location">
    <subcellularLocation>
        <location evidence="1">Cytoplasm</location>
    </subcellularLocation>
</comment>
<comment type="similarity">
    <text evidence="1">Belongs to the FGAMS family.</text>
</comment>
<proteinExistence type="inferred from homology"/>
<reference key="1">
    <citation type="submission" date="2009-03" db="EMBL/GenBank/DDBJ databases">
        <title>Comparison of the complete genome sequences of Rhodococcus erythropolis PR4 and Rhodococcus opacus B4.</title>
        <authorList>
            <person name="Takarada H."/>
            <person name="Sekine M."/>
            <person name="Hosoyama A."/>
            <person name="Yamada R."/>
            <person name="Fujisawa T."/>
            <person name="Omata S."/>
            <person name="Shimizu A."/>
            <person name="Tsukatani N."/>
            <person name="Tanikawa S."/>
            <person name="Fujita N."/>
            <person name="Harayama S."/>
        </authorList>
    </citation>
    <scope>NUCLEOTIDE SEQUENCE [LARGE SCALE GENOMIC DNA]</scope>
    <source>
        <strain>B4</strain>
    </source>
</reference>